<name>FOSL_DROYA</name>
<reference evidence="6" key="1">
    <citation type="journal article" date="2007" name="Nature">
        <title>Evolution of genes and genomes on the Drosophila phylogeny.</title>
        <authorList>
            <consortium name="Drosophila 12 genomes consortium"/>
        </authorList>
    </citation>
    <scope>NUCLEOTIDE SEQUENCE [LARGE SCALE GENOMIC DNA]</scope>
    <source>
        <strain evidence="6">Tai18E2 / Tucson 14021-0261.01</strain>
    </source>
</reference>
<keyword id="KW-0010">Activator</keyword>
<keyword id="KW-0238">DNA-binding</keyword>
<keyword id="KW-0539">Nucleus</keyword>
<keyword id="KW-0597">Phosphoprotein</keyword>
<keyword id="KW-0804">Transcription</keyword>
<keyword id="KW-0805">Transcription regulation</keyword>
<comment type="function">
    <text evidence="2">Developmentally regulated transcription factor AP-1 binds and recognizes the enhancer DNA sequence: 5'-TGA[CG]TCA-3'. May play a role in the function or determination of a particular subset of cells in the developing embryo. It is able to carry out its function either independently of or in conjunction with Jra (By similarity).</text>
</comment>
<comment type="subunit">
    <text evidence="1">Homodimer. Heterodimer with Jra. The kay-Jra heterodimer binds more stably to the AP-1 site than either of the two proteins alone (By similarity).</text>
</comment>
<comment type="subcellular location">
    <subcellularLocation>
        <location evidence="2 4">Nucleus</location>
    </subcellularLocation>
</comment>
<comment type="similarity">
    <text evidence="3">Belongs to the bZIP family. Fos subfamily.</text>
</comment>
<feature type="chain" id="PRO_0000377393" description="Transcription factor kayak">
    <location>
        <begin position="1"/>
        <end position="552"/>
    </location>
</feature>
<feature type="domain" description="bZIP" evidence="4">
    <location>
        <begin position="212"/>
        <end position="275"/>
    </location>
</feature>
<feature type="region of interest" description="Disordered" evidence="5">
    <location>
        <begin position="110"/>
        <end position="145"/>
    </location>
</feature>
<feature type="region of interest" description="Disordered" evidence="5">
    <location>
        <begin position="177"/>
        <end position="234"/>
    </location>
</feature>
<feature type="region of interest" description="Basic motif" evidence="4">
    <location>
        <begin position="214"/>
        <end position="233"/>
    </location>
</feature>
<feature type="region of interest" description="Leucine-zipper" evidence="4">
    <location>
        <begin position="240"/>
        <end position="247"/>
    </location>
</feature>
<feature type="region of interest" description="Disordered" evidence="5">
    <location>
        <begin position="304"/>
        <end position="346"/>
    </location>
</feature>
<feature type="region of interest" description="Disordered" evidence="5">
    <location>
        <begin position="365"/>
        <end position="390"/>
    </location>
</feature>
<feature type="region of interest" description="Disordered" evidence="5">
    <location>
        <begin position="514"/>
        <end position="552"/>
    </location>
</feature>
<feature type="compositionally biased region" description="Polar residues" evidence="5">
    <location>
        <begin position="111"/>
        <end position="127"/>
    </location>
</feature>
<feature type="compositionally biased region" description="Low complexity" evidence="5">
    <location>
        <begin position="135"/>
        <end position="145"/>
    </location>
</feature>
<feature type="compositionally biased region" description="Polar residues" evidence="5">
    <location>
        <begin position="177"/>
        <end position="192"/>
    </location>
</feature>
<feature type="compositionally biased region" description="Low complexity" evidence="5">
    <location>
        <begin position="304"/>
        <end position="325"/>
    </location>
</feature>
<feature type="compositionally biased region" description="Polar residues" evidence="5">
    <location>
        <begin position="333"/>
        <end position="343"/>
    </location>
</feature>
<feature type="modified residue" description="Phosphoserine" evidence="2">
    <location>
        <position position="342"/>
    </location>
</feature>
<sequence>MTLDSYNIFNDEYLFNMPLSPLPKVLGSFETVQSVLTLTTPTLTPTTTRNIEDTIGHLLSDTQPDRGAGCAGFAVPKVLPNAMGAIEALGMGIPSGVNSLPIQPAYDVNLAQGSDSEDSNASYNDTQMNEEQDTTDTSSAHTDSTSYQAGQIMAGSVNGGGVNNFTNVLAAVSSTRGAASVGSSNANTSNTPARRGGGRRPNRSTNMTPEEEQKRAVRRERNKQAAARCRKRRVDQTNELTEEVEQLEKRGDSMRKEIEALTMSKNQLEYCLAAHRPTCQKIRSDMLSVTTCNGLIAPAGLLSAGSSGSGASSHHNHNSNDSSNGTITGMDATLNSTGRSNSPLDLKPAANIDSLLLQHIKDEPLDGAIDSGSSLDQDGPPPSKRITLPPMSTMPHVHMSTLMTPTGASSGSLQTPITSTAPVGFGSAFPVTTNGSSINTINSISQNNMNSPTLNALNKVPKERPNTLAFQRPVGHMHLTLANNNKPGGPTQIQGVPIQTPSTGTFNFDSLMDGGTGLTPVSGPLVPNSSSANKHPLELPTPTAEPSKLVSL</sequence>
<organism>
    <name type="scientific">Drosophila yakuba</name>
    <name type="common">Fruit fly</name>
    <dbReference type="NCBI Taxonomy" id="7245"/>
    <lineage>
        <taxon>Eukaryota</taxon>
        <taxon>Metazoa</taxon>
        <taxon>Ecdysozoa</taxon>
        <taxon>Arthropoda</taxon>
        <taxon>Hexapoda</taxon>
        <taxon>Insecta</taxon>
        <taxon>Pterygota</taxon>
        <taxon>Neoptera</taxon>
        <taxon>Endopterygota</taxon>
        <taxon>Diptera</taxon>
        <taxon>Brachycera</taxon>
        <taxon>Muscomorpha</taxon>
        <taxon>Ephydroidea</taxon>
        <taxon>Drosophilidae</taxon>
        <taxon>Drosophila</taxon>
        <taxon>Sophophora</taxon>
    </lineage>
</organism>
<protein>
    <recommendedName>
        <fullName evidence="2">Transcription factor kayak</fullName>
    </recommendedName>
</protein>
<dbReference type="EMBL" id="CM000160">
    <property type="protein sequence ID" value="EDW98252.1"/>
    <property type="molecule type" value="Genomic_DNA"/>
</dbReference>
<dbReference type="SMR" id="B4PPK2"/>
<dbReference type="EnsemblMetazoa" id="FBtr0270402">
    <property type="protein sequence ID" value="FBpp0268894"/>
    <property type="gene ID" value="FBgn0241033"/>
</dbReference>
<dbReference type="EnsemblMetazoa" id="XM_002098504.4">
    <property type="protein sequence ID" value="XP_002098540.1"/>
    <property type="gene ID" value="LOC6538005"/>
</dbReference>
<dbReference type="GeneID" id="6538005"/>
<dbReference type="CTD" id="3772082"/>
<dbReference type="eggNOG" id="KOG1414">
    <property type="taxonomic scope" value="Eukaryota"/>
</dbReference>
<dbReference type="HOGENOM" id="CLU_020183_0_0_1"/>
<dbReference type="OMA" id="HQSLHFA"/>
<dbReference type="OrthoDB" id="5866312at2759"/>
<dbReference type="PhylomeDB" id="B4PPK2"/>
<dbReference type="ChiTaRS" id="kay">
    <property type="organism name" value="fly"/>
</dbReference>
<dbReference type="Proteomes" id="UP000002282">
    <property type="component" value="Chromosome 3R"/>
</dbReference>
<dbReference type="GO" id="GO:0005634">
    <property type="term" value="C:nucleus"/>
    <property type="evidence" value="ECO:0000250"/>
    <property type="project" value="UniProtKB"/>
</dbReference>
<dbReference type="GO" id="GO:0003677">
    <property type="term" value="F:DNA binding"/>
    <property type="evidence" value="ECO:0000250"/>
    <property type="project" value="UniProtKB"/>
</dbReference>
<dbReference type="GO" id="GO:0000981">
    <property type="term" value="F:DNA-binding transcription factor activity, RNA polymerase II-specific"/>
    <property type="evidence" value="ECO:0007669"/>
    <property type="project" value="TreeGrafter"/>
</dbReference>
<dbReference type="GO" id="GO:0000978">
    <property type="term" value="F:RNA polymerase II cis-regulatory region sequence-specific DNA binding"/>
    <property type="evidence" value="ECO:0007669"/>
    <property type="project" value="TreeGrafter"/>
</dbReference>
<dbReference type="GO" id="GO:0009792">
    <property type="term" value="P:embryo development ending in birth or egg hatching"/>
    <property type="evidence" value="ECO:0000250"/>
    <property type="project" value="UniProtKB"/>
</dbReference>
<dbReference type="CDD" id="cd14721">
    <property type="entry name" value="bZIP_Fos"/>
    <property type="match status" value="1"/>
</dbReference>
<dbReference type="FunFam" id="1.20.5.170:FF:000006">
    <property type="entry name" value="fos-related antigen 2 isoform X1"/>
    <property type="match status" value="1"/>
</dbReference>
<dbReference type="Gene3D" id="1.20.5.170">
    <property type="match status" value="1"/>
</dbReference>
<dbReference type="InterPro" id="IPR000837">
    <property type="entry name" value="AP-1"/>
</dbReference>
<dbReference type="InterPro" id="IPR004827">
    <property type="entry name" value="bZIP"/>
</dbReference>
<dbReference type="InterPro" id="IPR046347">
    <property type="entry name" value="bZIP_sf"/>
</dbReference>
<dbReference type="PANTHER" id="PTHR23351:SF24">
    <property type="entry name" value="ACTIVATING TRANSCRIPTION FACTOR 3-RELATED"/>
    <property type="match status" value="1"/>
</dbReference>
<dbReference type="PANTHER" id="PTHR23351">
    <property type="entry name" value="FOS TRANSCRIPTION FACTOR-RELATED"/>
    <property type="match status" value="1"/>
</dbReference>
<dbReference type="Pfam" id="PF00170">
    <property type="entry name" value="bZIP_1"/>
    <property type="match status" value="1"/>
</dbReference>
<dbReference type="PRINTS" id="PR00042">
    <property type="entry name" value="LEUZIPPRFOS"/>
</dbReference>
<dbReference type="SMART" id="SM00338">
    <property type="entry name" value="BRLZ"/>
    <property type="match status" value="1"/>
</dbReference>
<dbReference type="SUPFAM" id="SSF57959">
    <property type="entry name" value="Leucine zipper domain"/>
    <property type="match status" value="1"/>
</dbReference>
<dbReference type="PROSITE" id="PS50217">
    <property type="entry name" value="BZIP"/>
    <property type="match status" value="1"/>
</dbReference>
<dbReference type="PROSITE" id="PS00036">
    <property type="entry name" value="BZIP_BASIC"/>
    <property type="match status" value="1"/>
</dbReference>
<evidence type="ECO:0000250" key="1"/>
<evidence type="ECO:0000250" key="2">
    <source>
        <dbReference type="UniProtKB" id="P21525"/>
    </source>
</evidence>
<evidence type="ECO:0000255" key="3"/>
<evidence type="ECO:0000255" key="4">
    <source>
        <dbReference type="PROSITE-ProRule" id="PRU00978"/>
    </source>
</evidence>
<evidence type="ECO:0000256" key="5">
    <source>
        <dbReference type="SAM" id="MobiDB-lite"/>
    </source>
</evidence>
<evidence type="ECO:0000312" key="6">
    <source>
        <dbReference type="EMBL" id="EDW98252.1"/>
    </source>
</evidence>
<accession>B4PPK2</accession>
<proteinExistence type="inferred from homology"/>
<gene>
    <name evidence="2" type="primary">kay</name>
    <name type="ORF">GE23884</name>
</gene>